<organism>
    <name type="scientific">Caldicellulosiruptor saccharolyticus (strain ATCC 43494 / DSM 8903 / Tp8T 6331)</name>
    <dbReference type="NCBI Taxonomy" id="351627"/>
    <lineage>
        <taxon>Bacteria</taxon>
        <taxon>Bacillati</taxon>
        <taxon>Bacillota</taxon>
        <taxon>Bacillota incertae sedis</taxon>
        <taxon>Caldicellulosiruptorales</taxon>
        <taxon>Caldicellulosiruptoraceae</taxon>
        <taxon>Caldicellulosiruptor</taxon>
    </lineage>
</organism>
<feature type="chain" id="PRO_1000054766" description="Small ribosomal subunit protein uS15">
    <location>
        <begin position="1"/>
        <end position="88"/>
    </location>
</feature>
<keyword id="KW-0687">Ribonucleoprotein</keyword>
<keyword id="KW-0689">Ribosomal protein</keyword>
<keyword id="KW-0694">RNA-binding</keyword>
<keyword id="KW-0699">rRNA-binding</keyword>
<reference key="1">
    <citation type="submission" date="2007-04" db="EMBL/GenBank/DDBJ databases">
        <title>Genome sequence of the thermophilic hydrogen-producing bacterium Caldicellulosiruptor saccharolyticus DSM 8903.</title>
        <authorList>
            <person name="Copeland A."/>
            <person name="Lucas S."/>
            <person name="Lapidus A."/>
            <person name="Barry K."/>
            <person name="Detter J.C."/>
            <person name="Glavina del Rio T."/>
            <person name="Hammon N."/>
            <person name="Israni S."/>
            <person name="Dalin E."/>
            <person name="Tice H."/>
            <person name="Pitluck S."/>
            <person name="Kiss H."/>
            <person name="Brettin T."/>
            <person name="Bruce D."/>
            <person name="Han C."/>
            <person name="Schmutz J."/>
            <person name="Larimer F."/>
            <person name="Land M."/>
            <person name="Hauser L."/>
            <person name="Kyrpides N."/>
            <person name="Lykidis A."/>
            <person name="van de Werken H.J.G."/>
            <person name="Verhaart M.R.A."/>
            <person name="VanFossen A.L."/>
            <person name="Lewis D.L."/>
            <person name="Nichols J.D."/>
            <person name="Goorissen H.P."/>
            <person name="van Niel E.W.J."/>
            <person name="Stams F.J.M."/>
            <person name="Willquist K.U."/>
            <person name="Ward D.E."/>
            <person name="van der Oost J."/>
            <person name="Kelly R.M."/>
            <person name="Kengen S.M.W."/>
            <person name="Richardson P."/>
        </authorList>
    </citation>
    <scope>NUCLEOTIDE SEQUENCE [LARGE SCALE GENOMIC DNA]</scope>
    <source>
        <strain>ATCC 43494 / DSM 8903 / Tp8T 6331</strain>
    </source>
</reference>
<comment type="function">
    <text evidence="1">One of the primary rRNA binding proteins, it binds directly to 16S rRNA where it helps nucleate assembly of the platform of the 30S subunit by binding and bridging several RNA helices of the 16S rRNA.</text>
</comment>
<comment type="function">
    <text evidence="1">Forms an intersubunit bridge (bridge B4) with the 23S rRNA of the 50S subunit in the ribosome.</text>
</comment>
<comment type="subunit">
    <text evidence="1">Part of the 30S ribosomal subunit. Forms a bridge to the 50S subunit in the 70S ribosome, contacting the 23S rRNA.</text>
</comment>
<comment type="similarity">
    <text evidence="1">Belongs to the universal ribosomal protein uS15 family.</text>
</comment>
<dbReference type="EMBL" id="CP000679">
    <property type="protein sequence ID" value="ABP67650.1"/>
    <property type="molecule type" value="Genomic_DNA"/>
</dbReference>
<dbReference type="RefSeq" id="WP_011917585.1">
    <property type="nucleotide sequence ID" value="NC_009437.1"/>
</dbReference>
<dbReference type="SMR" id="A4XL65"/>
<dbReference type="STRING" id="351627.Csac_2065"/>
<dbReference type="KEGG" id="csc:Csac_2065"/>
<dbReference type="eggNOG" id="COG0184">
    <property type="taxonomic scope" value="Bacteria"/>
</dbReference>
<dbReference type="HOGENOM" id="CLU_148518_0_0_9"/>
<dbReference type="OrthoDB" id="9799262at2"/>
<dbReference type="Proteomes" id="UP000000256">
    <property type="component" value="Chromosome"/>
</dbReference>
<dbReference type="GO" id="GO:0022627">
    <property type="term" value="C:cytosolic small ribosomal subunit"/>
    <property type="evidence" value="ECO:0007669"/>
    <property type="project" value="TreeGrafter"/>
</dbReference>
<dbReference type="GO" id="GO:0019843">
    <property type="term" value="F:rRNA binding"/>
    <property type="evidence" value="ECO:0007669"/>
    <property type="project" value="UniProtKB-UniRule"/>
</dbReference>
<dbReference type="GO" id="GO:0003735">
    <property type="term" value="F:structural constituent of ribosome"/>
    <property type="evidence" value="ECO:0007669"/>
    <property type="project" value="InterPro"/>
</dbReference>
<dbReference type="GO" id="GO:0006412">
    <property type="term" value="P:translation"/>
    <property type="evidence" value="ECO:0007669"/>
    <property type="project" value="UniProtKB-UniRule"/>
</dbReference>
<dbReference type="CDD" id="cd00353">
    <property type="entry name" value="Ribosomal_S15p_S13e"/>
    <property type="match status" value="1"/>
</dbReference>
<dbReference type="FunFam" id="1.10.287.10:FF:000002">
    <property type="entry name" value="30S ribosomal protein S15"/>
    <property type="match status" value="1"/>
</dbReference>
<dbReference type="Gene3D" id="6.10.250.3130">
    <property type="match status" value="1"/>
</dbReference>
<dbReference type="Gene3D" id="1.10.287.10">
    <property type="entry name" value="S15/NS1, RNA-binding"/>
    <property type="match status" value="1"/>
</dbReference>
<dbReference type="HAMAP" id="MF_01343_B">
    <property type="entry name" value="Ribosomal_uS15_B"/>
    <property type="match status" value="1"/>
</dbReference>
<dbReference type="InterPro" id="IPR000589">
    <property type="entry name" value="Ribosomal_uS15"/>
</dbReference>
<dbReference type="InterPro" id="IPR005290">
    <property type="entry name" value="Ribosomal_uS15_bac-type"/>
</dbReference>
<dbReference type="InterPro" id="IPR009068">
    <property type="entry name" value="uS15_NS1_RNA-bd_sf"/>
</dbReference>
<dbReference type="NCBIfam" id="TIGR00952">
    <property type="entry name" value="S15_bact"/>
    <property type="match status" value="1"/>
</dbReference>
<dbReference type="PANTHER" id="PTHR23321">
    <property type="entry name" value="RIBOSOMAL PROTEIN S15, BACTERIAL AND ORGANELLAR"/>
    <property type="match status" value="1"/>
</dbReference>
<dbReference type="PANTHER" id="PTHR23321:SF26">
    <property type="entry name" value="SMALL RIBOSOMAL SUBUNIT PROTEIN US15M"/>
    <property type="match status" value="1"/>
</dbReference>
<dbReference type="Pfam" id="PF00312">
    <property type="entry name" value="Ribosomal_S15"/>
    <property type="match status" value="1"/>
</dbReference>
<dbReference type="SMART" id="SM01387">
    <property type="entry name" value="Ribosomal_S15"/>
    <property type="match status" value="1"/>
</dbReference>
<dbReference type="SUPFAM" id="SSF47060">
    <property type="entry name" value="S15/NS1 RNA-binding domain"/>
    <property type="match status" value="1"/>
</dbReference>
<dbReference type="PROSITE" id="PS00362">
    <property type="entry name" value="RIBOSOMAL_S15"/>
    <property type="match status" value="1"/>
</dbReference>
<proteinExistence type="inferred from homology"/>
<sequence length="88" mass="10713">MLTKEQKQEIIKKYQLHESDTGSPEVQIALLTERINRLNEHLQIHKKDFHSRRGLLKMVGQRRKLLNYLKEYDINRYRELIEKLGLRK</sequence>
<gene>
    <name evidence="1" type="primary">rpsO</name>
    <name type="ordered locus">Csac_2065</name>
</gene>
<accession>A4XL65</accession>
<evidence type="ECO:0000255" key="1">
    <source>
        <dbReference type="HAMAP-Rule" id="MF_01343"/>
    </source>
</evidence>
<evidence type="ECO:0000305" key="2"/>
<protein>
    <recommendedName>
        <fullName evidence="1">Small ribosomal subunit protein uS15</fullName>
    </recommendedName>
    <alternativeName>
        <fullName evidence="2">30S ribosomal protein S15</fullName>
    </alternativeName>
</protein>
<name>RS15_CALS8</name>